<feature type="chain" id="PRO_0000416677" description="S-phase delaying protein 2">
    <location>
        <begin position="1"/>
        <end position="102"/>
    </location>
</feature>
<feature type="region of interest" description="Disordered" evidence="2">
    <location>
        <begin position="43"/>
        <end position="62"/>
    </location>
</feature>
<feature type="compositionally biased region" description="Basic and acidic residues" evidence="2">
    <location>
        <begin position="46"/>
        <end position="62"/>
    </location>
</feature>
<name>SPD2_SCHPO</name>
<proteinExistence type="inferred from homology"/>
<dbReference type="EMBL" id="CU329670">
    <property type="protein sequence ID" value="CCD31322.1"/>
    <property type="molecule type" value="Genomic_DNA"/>
</dbReference>
<dbReference type="RefSeq" id="XP_004001777.1">
    <property type="nucleotide sequence ID" value="XM_004001728.1"/>
</dbReference>
<dbReference type="SMR" id="G2TRL7"/>
<dbReference type="BioGRID" id="4254476">
    <property type="interactions" value="1"/>
</dbReference>
<dbReference type="FunCoup" id="G2TRL7">
    <property type="interactions" value="200"/>
</dbReference>
<dbReference type="STRING" id="284812.G2TRL7"/>
<dbReference type="iPTMnet" id="G2TRL7"/>
<dbReference type="PaxDb" id="4896-SPAC3F10.19.1"/>
<dbReference type="EnsemblFungi" id="SPAC3F10.19.1">
    <property type="protein sequence ID" value="SPAC3F10.19.1:pep"/>
    <property type="gene ID" value="SPAC3F10.19"/>
</dbReference>
<dbReference type="PomBase" id="SPAC3F10.19">
    <property type="gene designation" value="spd2"/>
</dbReference>
<dbReference type="VEuPathDB" id="FungiDB:SPAC3F10.19"/>
<dbReference type="HOGENOM" id="CLU_2185473_0_0_1"/>
<dbReference type="InParanoid" id="G2TRL7"/>
<dbReference type="OMA" id="ADSIFWD"/>
<dbReference type="PRO" id="PR:G2TRL7"/>
<dbReference type="Proteomes" id="UP000002485">
    <property type="component" value="Chromosome I"/>
</dbReference>
<dbReference type="GO" id="GO:0005737">
    <property type="term" value="C:cytoplasm"/>
    <property type="evidence" value="ECO:0000318"/>
    <property type="project" value="GO_Central"/>
</dbReference>
<dbReference type="GO" id="GO:0005634">
    <property type="term" value="C:nucleus"/>
    <property type="evidence" value="ECO:0000318"/>
    <property type="project" value="GO_Central"/>
</dbReference>
<dbReference type="GO" id="GO:1990846">
    <property type="term" value="F:ribonucleoside-diphosphate reductase inhibitor activity"/>
    <property type="evidence" value="ECO:0000318"/>
    <property type="project" value="GO_Central"/>
</dbReference>
<dbReference type="GO" id="GO:0009262">
    <property type="term" value="P:deoxyribonucleotide metabolic process"/>
    <property type="evidence" value="ECO:0000315"/>
    <property type="project" value="PomBase"/>
</dbReference>
<dbReference type="GO" id="GO:0008104">
    <property type="term" value="P:protein localization"/>
    <property type="evidence" value="ECO:0000318"/>
    <property type="project" value="GO_Central"/>
</dbReference>
<dbReference type="InterPro" id="IPR013900">
    <property type="entry name" value="RNR_inhibitor"/>
</dbReference>
<dbReference type="PANTHER" id="PTHR28081:SF1">
    <property type="entry name" value="DAMAGE-REGULATED IMPORT FACILITATOR 1"/>
    <property type="match status" value="1"/>
</dbReference>
<dbReference type="PANTHER" id="PTHR28081">
    <property type="entry name" value="DAMAGE-REGULATED IMPORT FACILITATOR 1-RELATED"/>
    <property type="match status" value="1"/>
</dbReference>
<dbReference type="Pfam" id="PF08591">
    <property type="entry name" value="RNR_inhib"/>
    <property type="match status" value="1"/>
</dbReference>
<organism>
    <name type="scientific">Schizosaccharomyces pombe (strain 972 / ATCC 24843)</name>
    <name type="common">Fission yeast</name>
    <dbReference type="NCBI Taxonomy" id="284812"/>
    <lineage>
        <taxon>Eukaryota</taxon>
        <taxon>Fungi</taxon>
        <taxon>Dikarya</taxon>
        <taxon>Ascomycota</taxon>
        <taxon>Taphrinomycotina</taxon>
        <taxon>Schizosaccharomycetes</taxon>
        <taxon>Schizosaccharomycetales</taxon>
        <taxon>Schizosaccharomycetaceae</taxon>
        <taxon>Schizosaccharomyces</taxon>
    </lineage>
</organism>
<protein>
    <recommendedName>
        <fullName>S-phase delaying protein 2</fullName>
    </recommendedName>
</protein>
<comment type="function">
    <text evidence="1">Regulates the ribonucleotide reductase activity.</text>
</comment>
<comment type="subcellular location">
    <subcellularLocation>
        <location evidence="1">Cytoplasm</location>
    </subcellularLocation>
    <subcellularLocation>
        <location evidence="1">Nucleus</location>
    </subcellularLocation>
</comment>
<comment type="similarity">
    <text evidence="3">Belongs to the DIF1/spd1 family.</text>
</comment>
<keyword id="KW-0963">Cytoplasm</keyword>
<keyword id="KW-0539">Nucleus</keyword>
<keyword id="KW-1185">Reference proteome</keyword>
<sequence>MSETFKLPDHDELPQLVQTTLFDVGARVRKAVQTGYKFDQQLFPSYHKDQTDRNELPQQKHDPNLRLDDLKQELAADSIFWDTASTQEIADSFAKPDFLKSH</sequence>
<gene>
    <name type="primary">spd2</name>
    <name type="ORF">SPAC3F10.19</name>
</gene>
<evidence type="ECO:0000250" key="1"/>
<evidence type="ECO:0000256" key="2">
    <source>
        <dbReference type="SAM" id="MobiDB-lite"/>
    </source>
</evidence>
<evidence type="ECO:0000305" key="3"/>
<reference key="1">
    <citation type="journal article" date="2002" name="Nature">
        <title>The genome sequence of Schizosaccharomyces pombe.</title>
        <authorList>
            <person name="Wood V."/>
            <person name="Gwilliam R."/>
            <person name="Rajandream M.A."/>
            <person name="Lyne M.H."/>
            <person name="Lyne R."/>
            <person name="Stewart A."/>
            <person name="Sgouros J.G."/>
            <person name="Peat N."/>
            <person name="Hayles J."/>
            <person name="Baker S.G."/>
            <person name="Basham D."/>
            <person name="Bowman S."/>
            <person name="Brooks K."/>
            <person name="Brown D."/>
            <person name="Brown S."/>
            <person name="Chillingworth T."/>
            <person name="Churcher C.M."/>
            <person name="Collins M."/>
            <person name="Connor R."/>
            <person name="Cronin A."/>
            <person name="Davis P."/>
            <person name="Feltwell T."/>
            <person name="Fraser A."/>
            <person name="Gentles S."/>
            <person name="Goble A."/>
            <person name="Hamlin N."/>
            <person name="Harris D.E."/>
            <person name="Hidalgo J."/>
            <person name="Hodgson G."/>
            <person name="Holroyd S."/>
            <person name="Hornsby T."/>
            <person name="Howarth S."/>
            <person name="Huckle E.J."/>
            <person name="Hunt S."/>
            <person name="Jagels K."/>
            <person name="James K.D."/>
            <person name="Jones L."/>
            <person name="Jones M."/>
            <person name="Leather S."/>
            <person name="McDonald S."/>
            <person name="McLean J."/>
            <person name="Mooney P."/>
            <person name="Moule S."/>
            <person name="Mungall K.L."/>
            <person name="Murphy L.D."/>
            <person name="Niblett D."/>
            <person name="Odell C."/>
            <person name="Oliver K."/>
            <person name="O'Neil S."/>
            <person name="Pearson D."/>
            <person name="Quail M.A."/>
            <person name="Rabbinowitsch E."/>
            <person name="Rutherford K.M."/>
            <person name="Rutter S."/>
            <person name="Saunders D."/>
            <person name="Seeger K."/>
            <person name="Sharp S."/>
            <person name="Skelton J."/>
            <person name="Simmonds M.N."/>
            <person name="Squares R."/>
            <person name="Squares S."/>
            <person name="Stevens K."/>
            <person name="Taylor K."/>
            <person name="Taylor R.G."/>
            <person name="Tivey A."/>
            <person name="Walsh S.V."/>
            <person name="Warren T."/>
            <person name="Whitehead S."/>
            <person name="Woodward J.R."/>
            <person name="Volckaert G."/>
            <person name="Aert R."/>
            <person name="Robben J."/>
            <person name="Grymonprez B."/>
            <person name="Weltjens I."/>
            <person name="Vanstreels E."/>
            <person name="Rieger M."/>
            <person name="Schaefer M."/>
            <person name="Mueller-Auer S."/>
            <person name="Gabel C."/>
            <person name="Fuchs M."/>
            <person name="Duesterhoeft A."/>
            <person name="Fritzc C."/>
            <person name="Holzer E."/>
            <person name="Moestl D."/>
            <person name="Hilbert H."/>
            <person name="Borzym K."/>
            <person name="Langer I."/>
            <person name="Beck A."/>
            <person name="Lehrach H."/>
            <person name="Reinhardt R."/>
            <person name="Pohl T.M."/>
            <person name="Eger P."/>
            <person name="Zimmermann W."/>
            <person name="Wedler H."/>
            <person name="Wambutt R."/>
            <person name="Purnelle B."/>
            <person name="Goffeau A."/>
            <person name="Cadieu E."/>
            <person name="Dreano S."/>
            <person name="Gloux S."/>
            <person name="Lelaure V."/>
            <person name="Mottier S."/>
            <person name="Galibert F."/>
            <person name="Aves S.J."/>
            <person name="Xiang Z."/>
            <person name="Hunt C."/>
            <person name="Moore K."/>
            <person name="Hurst S.M."/>
            <person name="Lucas M."/>
            <person name="Rochet M."/>
            <person name="Gaillardin C."/>
            <person name="Tallada V.A."/>
            <person name="Garzon A."/>
            <person name="Thode G."/>
            <person name="Daga R.R."/>
            <person name="Cruzado L."/>
            <person name="Jimenez J."/>
            <person name="Sanchez M."/>
            <person name="del Rey F."/>
            <person name="Benito J."/>
            <person name="Dominguez A."/>
            <person name="Revuelta J.L."/>
            <person name="Moreno S."/>
            <person name="Armstrong J."/>
            <person name="Forsburg S.L."/>
            <person name="Cerutti L."/>
            <person name="Lowe T."/>
            <person name="McCombie W.R."/>
            <person name="Paulsen I."/>
            <person name="Potashkin J."/>
            <person name="Shpakovski G.V."/>
            <person name="Ussery D."/>
            <person name="Barrell B.G."/>
            <person name="Nurse P."/>
        </authorList>
    </citation>
    <scope>NUCLEOTIDE SEQUENCE [LARGE SCALE GENOMIC DNA]</scope>
    <source>
        <strain>972 / ATCC 24843</strain>
    </source>
</reference>
<reference key="2">
    <citation type="journal article" date="2011" name="Science">
        <title>Comparative functional genomics of the fission yeasts.</title>
        <authorList>
            <person name="Rhind N."/>
            <person name="Chen Z."/>
            <person name="Yassour M."/>
            <person name="Thompson D.A."/>
            <person name="Haas B.J."/>
            <person name="Habib N."/>
            <person name="Wapinski I."/>
            <person name="Roy S."/>
            <person name="Lin M.F."/>
            <person name="Heiman D.I."/>
            <person name="Young S.K."/>
            <person name="Furuya K."/>
            <person name="Guo Y."/>
            <person name="Pidoux A."/>
            <person name="Chen H.M."/>
            <person name="Robbertse B."/>
            <person name="Goldberg J.M."/>
            <person name="Aoki K."/>
            <person name="Bayne E.H."/>
            <person name="Berlin A.M."/>
            <person name="Desjardins C.A."/>
            <person name="Dobbs E."/>
            <person name="Dukaj L."/>
            <person name="Fan L."/>
            <person name="FitzGerald M.G."/>
            <person name="French C."/>
            <person name="Gujja S."/>
            <person name="Hansen K."/>
            <person name="Keifenheim D."/>
            <person name="Levin J.Z."/>
            <person name="Mosher R.A."/>
            <person name="Mueller C.A."/>
            <person name="Pfiffner J."/>
            <person name="Priest M."/>
            <person name="Russ C."/>
            <person name="Smialowska A."/>
            <person name="Swoboda P."/>
            <person name="Sykes S.M."/>
            <person name="Vaughn M."/>
            <person name="Vengrova S."/>
            <person name="Yoder R."/>
            <person name="Zeng Q."/>
            <person name="Allshire R."/>
            <person name="Baulcombe D."/>
            <person name="Birren B.W."/>
            <person name="Brown W."/>
            <person name="Ekwall K."/>
            <person name="Kellis M."/>
            <person name="Leatherwood J."/>
            <person name="Levin H."/>
            <person name="Margalit H."/>
            <person name="Martienssen R."/>
            <person name="Nieduszynski C.A."/>
            <person name="Spatafora J.W."/>
            <person name="Friedman N."/>
            <person name="Dalgaard J.Z."/>
            <person name="Baumann P."/>
            <person name="Niki H."/>
            <person name="Regev A."/>
            <person name="Nusbaum C."/>
        </authorList>
    </citation>
    <scope>IDENTIFICATION</scope>
</reference>
<accession>G2TRL7</accession>